<dbReference type="EMBL" id="CU928161">
    <property type="protein sequence ID" value="CAR04872.1"/>
    <property type="molecule type" value="Genomic_DNA"/>
</dbReference>
<dbReference type="RefSeq" id="WP_000462905.1">
    <property type="nucleotide sequence ID" value="NC_011742.1"/>
</dbReference>
<dbReference type="SMR" id="B7MC31"/>
<dbReference type="GeneID" id="98390389"/>
<dbReference type="KEGG" id="ecz:ECS88_3646"/>
<dbReference type="HOGENOM" id="CLU_158040_3_0_6"/>
<dbReference type="Proteomes" id="UP000000747">
    <property type="component" value="Chromosome"/>
</dbReference>
<dbReference type="GO" id="GO:0003700">
    <property type="term" value="F:DNA-binding transcription factor activity"/>
    <property type="evidence" value="ECO:0007669"/>
    <property type="project" value="UniProtKB-UniRule"/>
</dbReference>
<dbReference type="GO" id="GO:0043565">
    <property type="term" value="F:sequence-specific DNA binding"/>
    <property type="evidence" value="ECO:0007669"/>
    <property type="project" value="InterPro"/>
</dbReference>
<dbReference type="FunFam" id="1.10.10.60:FF:000006">
    <property type="entry name" value="DNA-binding protein Fis"/>
    <property type="match status" value="1"/>
</dbReference>
<dbReference type="Gene3D" id="1.10.10.60">
    <property type="entry name" value="Homeodomain-like"/>
    <property type="match status" value="1"/>
</dbReference>
<dbReference type="HAMAP" id="MF_00166">
    <property type="entry name" value="DNA_binding_Fis"/>
    <property type="match status" value="1"/>
</dbReference>
<dbReference type="InterPro" id="IPR005412">
    <property type="entry name" value="Fis_DNA-bd"/>
</dbReference>
<dbReference type="InterPro" id="IPR009057">
    <property type="entry name" value="Homeodomain-like_sf"/>
</dbReference>
<dbReference type="InterPro" id="IPR002197">
    <property type="entry name" value="HTH_Fis"/>
</dbReference>
<dbReference type="InterPro" id="IPR050207">
    <property type="entry name" value="Trans_regulatory_Fis"/>
</dbReference>
<dbReference type="NCBIfam" id="NF001659">
    <property type="entry name" value="PRK00430.1"/>
    <property type="match status" value="1"/>
</dbReference>
<dbReference type="PANTHER" id="PTHR47918">
    <property type="entry name" value="DNA-BINDING PROTEIN FIS"/>
    <property type="match status" value="1"/>
</dbReference>
<dbReference type="PANTHER" id="PTHR47918:SF1">
    <property type="entry name" value="DNA-BINDING PROTEIN FIS"/>
    <property type="match status" value="1"/>
</dbReference>
<dbReference type="Pfam" id="PF02954">
    <property type="entry name" value="HTH_8"/>
    <property type="match status" value="1"/>
</dbReference>
<dbReference type="PIRSF" id="PIRSF002097">
    <property type="entry name" value="DNA-binding_Fis"/>
    <property type="match status" value="1"/>
</dbReference>
<dbReference type="PRINTS" id="PR01591">
    <property type="entry name" value="DNABINDNGFIS"/>
</dbReference>
<dbReference type="PRINTS" id="PR01590">
    <property type="entry name" value="HTHFIS"/>
</dbReference>
<dbReference type="SUPFAM" id="SSF46689">
    <property type="entry name" value="Homeodomain-like"/>
    <property type="match status" value="1"/>
</dbReference>
<sequence length="98" mass="11240">MFEQRVNSDVLTVSTVNSQDQVTQKPLRDSVKQALKNYFAQLNGQDVNDLYELVLAEVEQPLLDMVMQYTRGNQTRAALMMGINRGTLRKKLKKYGMN</sequence>
<feature type="chain" id="PRO_1000118221" description="DNA-binding protein Fis">
    <location>
        <begin position="1"/>
        <end position="98"/>
    </location>
</feature>
<feature type="DNA-binding region" description="H-T-H motif" evidence="1">
    <location>
        <begin position="74"/>
        <end position="93"/>
    </location>
</feature>
<proteinExistence type="inferred from homology"/>
<name>FIS_ECO45</name>
<accession>B7MC31</accession>
<protein>
    <recommendedName>
        <fullName evidence="1">DNA-binding protein Fis</fullName>
    </recommendedName>
</protein>
<organism>
    <name type="scientific">Escherichia coli O45:K1 (strain S88 / ExPEC)</name>
    <dbReference type="NCBI Taxonomy" id="585035"/>
    <lineage>
        <taxon>Bacteria</taxon>
        <taxon>Pseudomonadati</taxon>
        <taxon>Pseudomonadota</taxon>
        <taxon>Gammaproteobacteria</taxon>
        <taxon>Enterobacterales</taxon>
        <taxon>Enterobacteriaceae</taxon>
        <taxon>Escherichia</taxon>
    </lineage>
</organism>
<reference key="1">
    <citation type="journal article" date="2009" name="PLoS Genet.">
        <title>Organised genome dynamics in the Escherichia coli species results in highly diverse adaptive paths.</title>
        <authorList>
            <person name="Touchon M."/>
            <person name="Hoede C."/>
            <person name="Tenaillon O."/>
            <person name="Barbe V."/>
            <person name="Baeriswyl S."/>
            <person name="Bidet P."/>
            <person name="Bingen E."/>
            <person name="Bonacorsi S."/>
            <person name="Bouchier C."/>
            <person name="Bouvet O."/>
            <person name="Calteau A."/>
            <person name="Chiapello H."/>
            <person name="Clermont O."/>
            <person name="Cruveiller S."/>
            <person name="Danchin A."/>
            <person name="Diard M."/>
            <person name="Dossat C."/>
            <person name="Karoui M.E."/>
            <person name="Frapy E."/>
            <person name="Garry L."/>
            <person name="Ghigo J.M."/>
            <person name="Gilles A.M."/>
            <person name="Johnson J."/>
            <person name="Le Bouguenec C."/>
            <person name="Lescat M."/>
            <person name="Mangenot S."/>
            <person name="Martinez-Jehanne V."/>
            <person name="Matic I."/>
            <person name="Nassif X."/>
            <person name="Oztas S."/>
            <person name="Petit M.A."/>
            <person name="Pichon C."/>
            <person name="Rouy Z."/>
            <person name="Ruf C.S."/>
            <person name="Schneider D."/>
            <person name="Tourret J."/>
            <person name="Vacherie B."/>
            <person name="Vallenet D."/>
            <person name="Medigue C."/>
            <person name="Rocha E.P.C."/>
            <person name="Denamur E."/>
        </authorList>
    </citation>
    <scope>NUCLEOTIDE SEQUENCE [LARGE SCALE GENOMIC DNA]</scope>
    <source>
        <strain>S88 / ExPEC</strain>
    </source>
</reference>
<gene>
    <name evidence="1" type="primary">fis</name>
    <name type="ordered locus">ECS88_3646</name>
</gene>
<keyword id="KW-0010">Activator</keyword>
<keyword id="KW-0238">DNA-binding</keyword>
<keyword id="KW-1185">Reference proteome</keyword>
<keyword id="KW-0804">Transcription</keyword>
<keyword id="KW-0805">Transcription regulation</keyword>
<comment type="function">
    <text evidence="1">Activates ribosomal RNA transcription. Plays a direct role in upstream activation of rRNA promoters.</text>
</comment>
<comment type="subunit">
    <text evidence="1">Homodimer.</text>
</comment>
<comment type="similarity">
    <text evidence="1">Belongs to the transcriptional regulatory Fis family.</text>
</comment>
<evidence type="ECO:0000255" key="1">
    <source>
        <dbReference type="HAMAP-Rule" id="MF_00166"/>
    </source>
</evidence>